<gene>
    <name evidence="1" type="primary">thrB</name>
    <name type="ordered locus">amb0763</name>
</gene>
<comment type="catalytic activity">
    <reaction evidence="1">
        <text>L-homoserine + ATP = O-phospho-L-homoserine + ADP + H(+)</text>
        <dbReference type="Rhea" id="RHEA:13985"/>
        <dbReference type="ChEBI" id="CHEBI:15378"/>
        <dbReference type="ChEBI" id="CHEBI:30616"/>
        <dbReference type="ChEBI" id="CHEBI:57476"/>
        <dbReference type="ChEBI" id="CHEBI:57590"/>
        <dbReference type="ChEBI" id="CHEBI:456216"/>
        <dbReference type="EC" id="2.7.1.39"/>
    </reaction>
</comment>
<comment type="pathway">
    <text evidence="1">Amino-acid biosynthesis; L-threonine biosynthesis; L-threonine from L-aspartate: step 4/5.</text>
</comment>
<comment type="similarity">
    <text evidence="1">Belongs to the pseudomonas-type ThrB family.</text>
</comment>
<dbReference type="EC" id="2.7.1.39" evidence="1"/>
<dbReference type="EMBL" id="AP007255">
    <property type="protein sequence ID" value="BAE49567.1"/>
    <property type="molecule type" value="Genomic_DNA"/>
</dbReference>
<dbReference type="RefSeq" id="WP_011383206.1">
    <property type="nucleotide sequence ID" value="NC_007626.1"/>
</dbReference>
<dbReference type="SMR" id="Q2W9A8"/>
<dbReference type="STRING" id="342108.amb0763"/>
<dbReference type="KEGG" id="mag:amb0763"/>
<dbReference type="HOGENOM" id="CLU_053300_1_0_5"/>
<dbReference type="OrthoDB" id="9777460at2"/>
<dbReference type="UniPathway" id="UPA00050">
    <property type="reaction ID" value="UER00064"/>
</dbReference>
<dbReference type="Proteomes" id="UP000007058">
    <property type="component" value="Chromosome"/>
</dbReference>
<dbReference type="GO" id="GO:0005524">
    <property type="term" value="F:ATP binding"/>
    <property type="evidence" value="ECO:0007669"/>
    <property type="project" value="UniProtKB-KW"/>
</dbReference>
<dbReference type="GO" id="GO:0004413">
    <property type="term" value="F:homoserine kinase activity"/>
    <property type="evidence" value="ECO:0007669"/>
    <property type="project" value="UniProtKB-UniRule"/>
</dbReference>
<dbReference type="GO" id="GO:0009088">
    <property type="term" value="P:threonine biosynthetic process"/>
    <property type="evidence" value="ECO:0007669"/>
    <property type="project" value="UniProtKB-UniRule"/>
</dbReference>
<dbReference type="CDD" id="cd05153">
    <property type="entry name" value="HomoserineK_II"/>
    <property type="match status" value="1"/>
</dbReference>
<dbReference type="Gene3D" id="3.90.1200.10">
    <property type="match status" value="1"/>
</dbReference>
<dbReference type="Gene3D" id="3.30.200.20">
    <property type="entry name" value="Phosphorylase Kinase, domain 1"/>
    <property type="match status" value="1"/>
</dbReference>
<dbReference type="HAMAP" id="MF_00301">
    <property type="entry name" value="Homoser_kinase_2"/>
    <property type="match status" value="1"/>
</dbReference>
<dbReference type="InterPro" id="IPR002575">
    <property type="entry name" value="Aminoglycoside_PTrfase"/>
</dbReference>
<dbReference type="InterPro" id="IPR005280">
    <property type="entry name" value="Homoserine_kinase_II"/>
</dbReference>
<dbReference type="InterPro" id="IPR011009">
    <property type="entry name" value="Kinase-like_dom_sf"/>
</dbReference>
<dbReference type="InterPro" id="IPR050249">
    <property type="entry name" value="Pseudomonas-type_ThrB"/>
</dbReference>
<dbReference type="NCBIfam" id="NF003558">
    <property type="entry name" value="PRK05231.1"/>
    <property type="match status" value="1"/>
</dbReference>
<dbReference type="NCBIfam" id="TIGR00938">
    <property type="entry name" value="thrB_alt"/>
    <property type="match status" value="1"/>
</dbReference>
<dbReference type="PANTHER" id="PTHR21064:SF6">
    <property type="entry name" value="AMINOGLYCOSIDE PHOSPHOTRANSFERASE DOMAIN-CONTAINING PROTEIN"/>
    <property type="match status" value="1"/>
</dbReference>
<dbReference type="PANTHER" id="PTHR21064">
    <property type="entry name" value="AMINOGLYCOSIDE PHOSPHOTRANSFERASE DOMAIN-CONTAINING PROTEIN-RELATED"/>
    <property type="match status" value="1"/>
</dbReference>
<dbReference type="Pfam" id="PF01636">
    <property type="entry name" value="APH"/>
    <property type="match status" value="1"/>
</dbReference>
<dbReference type="SUPFAM" id="SSF56112">
    <property type="entry name" value="Protein kinase-like (PK-like)"/>
    <property type="match status" value="1"/>
</dbReference>
<protein>
    <recommendedName>
        <fullName evidence="1">Homoserine kinase</fullName>
        <shortName evidence="1">HK</shortName>
        <shortName evidence="1">HSK</shortName>
        <ecNumber evidence="1">2.7.1.39</ecNumber>
    </recommendedName>
</protein>
<keyword id="KW-0028">Amino-acid biosynthesis</keyword>
<keyword id="KW-0067">ATP-binding</keyword>
<keyword id="KW-0418">Kinase</keyword>
<keyword id="KW-0547">Nucleotide-binding</keyword>
<keyword id="KW-0791">Threonine biosynthesis</keyword>
<keyword id="KW-0808">Transferase</keyword>
<reference key="1">
    <citation type="journal article" date="2005" name="DNA Res.">
        <title>Complete genome sequence of the facultative anaerobic magnetotactic bacterium Magnetospirillum sp. strain AMB-1.</title>
        <authorList>
            <person name="Matsunaga T."/>
            <person name="Okamura Y."/>
            <person name="Fukuda Y."/>
            <person name="Wahyudi A.T."/>
            <person name="Murase Y."/>
            <person name="Takeyama H."/>
        </authorList>
    </citation>
    <scope>NUCLEOTIDE SEQUENCE [LARGE SCALE GENOMIC DNA]</scope>
    <source>
        <strain>ATCC 700264 / AMB-1</strain>
    </source>
</reference>
<feature type="chain" id="PRO_0000300793" description="Homoserine kinase">
    <location>
        <begin position="1"/>
        <end position="326"/>
    </location>
</feature>
<accession>Q2W9A8</accession>
<organism>
    <name type="scientific">Paramagnetospirillum magneticum (strain ATCC 700264 / AMB-1)</name>
    <name type="common">Magnetospirillum magneticum</name>
    <dbReference type="NCBI Taxonomy" id="342108"/>
    <lineage>
        <taxon>Bacteria</taxon>
        <taxon>Pseudomonadati</taxon>
        <taxon>Pseudomonadota</taxon>
        <taxon>Alphaproteobacteria</taxon>
        <taxon>Rhodospirillales</taxon>
        <taxon>Magnetospirillaceae</taxon>
        <taxon>Paramagnetospirillum</taxon>
    </lineage>
</organism>
<sequence>MAVYTEVSDDELEDFAAEYDIGQVVSCKGIAEGVENTNYLLQTDQGNYILTLYEKRVNPEELPFFLGLMEHLAAHGLACPTPIHGRDGKALRTLCGRPAAIVSFLKGMWSRRITLGHCAELGPAMATMHLAGADFPLTRANNLSVAGWRPLFESIRPRAAEIKSDLAQSIEDELDYLEAHWPRTLPVGLIHADLFPDNVFFLADKAAGVDRMSGFIDFYFACTDVLAYDIAICLNAWCFEEDGAFNATKARLMLNGYRRVRPLSADELDALPLLARGAAMRFLLTRSYDWLHTPPGAMVKRKDPMEYYRKLRFHQGVTGPGQYGIE</sequence>
<name>KHSE_PARM1</name>
<evidence type="ECO:0000255" key="1">
    <source>
        <dbReference type="HAMAP-Rule" id="MF_00301"/>
    </source>
</evidence>
<proteinExistence type="inferred from homology"/>